<gene>
    <name evidence="1" type="primary">smpB</name>
    <name type="ordered locus">CJA_3362</name>
</gene>
<comment type="function">
    <text evidence="1">Required for rescue of stalled ribosomes mediated by trans-translation. Binds to transfer-messenger RNA (tmRNA), required for stable association of tmRNA with ribosomes. tmRNA and SmpB together mimic tRNA shape, replacing the anticodon stem-loop with SmpB. tmRNA is encoded by the ssrA gene; the 2 termini fold to resemble tRNA(Ala) and it encodes a 'tag peptide', a short internal open reading frame. During trans-translation Ala-aminoacylated tmRNA acts like a tRNA, entering the A-site of stalled ribosomes, displacing the stalled mRNA. The ribosome then switches to translate the ORF on the tmRNA; the nascent peptide is terminated with the 'tag peptide' encoded by the tmRNA and targeted for degradation. The ribosome is freed to recommence translation, which seems to be the essential function of trans-translation.</text>
</comment>
<comment type="subcellular location">
    <subcellularLocation>
        <location evidence="1">Cytoplasm</location>
    </subcellularLocation>
    <text evidence="1">The tmRNA-SmpB complex associates with stalled 70S ribosomes.</text>
</comment>
<comment type="similarity">
    <text evidence="1">Belongs to the SmpB family.</text>
</comment>
<reference key="1">
    <citation type="journal article" date="2008" name="J. Bacteriol.">
        <title>Insights into plant cell wall degradation from the genome sequence of the soil bacterium Cellvibrio japonicus.</title>
        <authorList>
            <person name="DeBoy R.T."/>
            <person name="Mongodin E.F."/>
            <person name="Fouts D.E."/>
            <person name="Tailford L.E."/>
            <person name="Khouri H."/>
            <person name="Emerson J.B."/>
            <person name="Mohamoud Y."/>
            <person name="Watkins K."/>
            <person name="Henrissat B."/>
            <person name="Gilbert H.J."/>
            <person name="Nelson K.E."/>
        </authorList>
    </citation>
    <scope>NUCLEOTIDE SEQUENCE [LARGE SCALE GENOMIC DNA]</scope>
    <source>
        <strain>Ueda107</strain>
    </source>
</reference>
<proteinExistence type="inferred from homology"/>
<keyword id="KW-0963">Cytoplasm</keyword>
<keyword id="KW-1185">Reference proteome</keyword>
<keyword id="KW-0694">RNA-binding</keyword>
<accession>B3PF48</accession>
<evidence type="ECO:0000255" key="1">
    <source>
        <dbReference type="HAMAP-Rule" id="MF_00023"/>
    </source>
</evidence>
<evidence type="ECO:0000256" key="2">
    <source>
        <dbReference type="SAM" id="MobiDB-lite"/>
    </source>
</evidence>
<name>SSRP_CELJU</name>
<organism>
    <name type="scientific">Cellvibrio japonicus (strain Ueda107)</name>
    <name type="common">Pseudomonas fluorescens subsp. cellulosa</name>
    <dbReference type="NCBI Taxonomy" id="498211"/>
    <lineage>
        <taxon>Bacteria</taxon>
        <taxon>Pseudomonadati</taxon>
        <taxon>Pseudomonadota</taxon>
        <taxon>Gammaproteobacteria</taxon>
        <taxon>Cellvibrionales</taxon>
        <taxon>Cellvibrionaceae</taxon>
        <taxon>Cellvibrio</taxon>
    </lineage>
</organism>
<protein>
    <recommendedName>
        <fullName evidence="1">SsrA-binding protein</fullName>
    </recommendedName>
    <alternativeName>
        <fullName evidence="1">Small protein B</fullName>
    </alternativeName>
</protein>
<dbReference type="EMBL" id="CP000934">
    <property type="protein sequence ID" value="ACE82808.1"/>
    <property type="molecule type" value="Genomic_DNA"/>
</dbReference>
<dbReference type="RefSeq" id="WP_012488938.1">
    <property type="nucleotide sequence ID" value="NC_010995.1"/>
</dbReference>
<dbReference type="SMR" id="B3PF48"/>
<dbReference type="STRING" id="498211.CJA_3362"/>
<dbReference type="KEGG" id="cja:CJA_3362"/>
<dbReference type="eggNOG" id="COG0691">
    <property type="taxonomic scope" value="Bacteria"/>
</dbReference>
<dbReference type="HOGENOM" id="CLU_108953_3_0_6"/>
<dbReference type="OrthoDB" id="9805462at2"/>
<dbReference type="Proteomes" id="UP000001036">
    <property type="component" value="Chromosome"/>
</dbReference>
<dbReference type="GO" id="GO:0005829">
    <property type="term" value="C:cytosol"/>
    <property type="evidence" value="ECO:0007669"/>
    <property type="project" value="TreeGrafter"/>
</dbReference>
<dbReference type="GO" id="GO:0003723">
    <property type="term" value="F:RNA binding"/>
    <property type="evidence" value="ECO:0007669"/>
    <property type="project" value="UniProtKB-UniRule"/>
</dbReference>
<dbReference type="GO" id="GO:0070929">
    <property type="term" value="P:trans-translation"/>
    <property type="evidence" value="ECO:0007669"/>
    <property type="project" value="UniProtKB-UniRule"/>
</dbReference>
<dbReference type="CDD" id="cd09294">
    <property type="entry name" value="SmpB"/>
    <property type="match status" value="1"/>
</dbReference>
<dbReference type="Gene3D" id="2.40.280.10">
    <property type="match status" value="1"/>
</dbReference>
<dbReference type="HAMAP" id="MF_00023">
    <property type="entry name" value="SmpB"/>
    <property type="match status" value="1"/>
</dbReference>
<dbReference type="InterPro" id="IPR023620">
    <property type="entry name" value="SmpB"/>
</dbReference>
<dbReference type="InterPro" id="IPR000037">
    <property type="entry name" value="SsrA-bd_prot"/>
</dbReference>
<dbReference type="InterPro" id="IPR020081">
    <property type="entry name" value="SsrA-bd_prot_CS"/>
</dbReference>
<dbReference type="NCBIfam" id="NF003843">
    <property type="entry name" value="PRK05422.1"/>
    <property type="match status" value="1"/>
</dbReference>
<dbReference type="NCBIfam" id="TIGR00086">
    <property type="entry name" value="smpB"/>
    <property type="match status" value="1"/>
</dbReference>
<dbReference type="PANTHER" id="PTHR30308:SF2">
    <property type="entry name" value="SSRA-BINDING PROTEIN"/>
    <property type="match status" value="1"/>
</dbReference>
<dbReference type="PANTHER" id="PTHR30308">
    <property type="entry name" value="TMRNA-BINDING COMPONENT OF TRANS-TRANSLATION TAGGING COMPLEX"/>
    <property type="match status" value="1"/>
</dbReference>
<dbReference type="Pfam" id="PF01668">
    <property type="entry name" value="SmpB"/>
    <property type="match status" value="1"/>
</dbReference>
<dbReference type="SUPFAM" id="SSF74982">
    <property type="entry name" value="Small protein B (SmpB)"/>
    <property type="match status" value="1"/>
</dbReference>
<dbReference type="PROSITE" id="PS01317">
    <property type="entry name" value="SSRP"/>
    <property type="match status" value="1"/>
</dbReference>
<feature type="chain" id="PRO_1000116416" description="SsrA-binding protein">
    <location>
        <begin position="1"/>
        <end position="159"/>
    </location>
</feature>
<feature type="region of interest" description="Disordered" evidence="2">
    <location>
        <begin position="137"/>
        <end position="159"/>
    </location>
</feature>
<sequence>MAKKNQKSGSNTIALNKKAKFDYELHERFEAGLALTGWEVKSLRAGKGNITDCYVIFKNNEAWLQACQIQPLLSASTHFVTDPFRNRKLLLNRREINRLQEAVEQKGYTVVPIALYWKAHMVKCEIAIAKGKQLHDKRQTEKERDWEREKQRLFQRDQR</sequence>